<name>COAD_LIMRJ</name>
<organism>
    <name type="scientific">Limosilactobacillus reuteri subsp. reuteri (strain JCM 1112)</name>
    <name type="common">Lactobacillus reuteri</name>
    <dbReference type="NCBI Taxonomy" id="557433"/>
    <lineage>
        <taxon>Bacteria</taxon>
        <taxon>Bacillati</taxon>
        <taxon>Bacillota</taxon>
        <taxon>Bacilli</taxon>
        <taxon>Lactobacillales</taxon>
        <taxon>Lactobacillaceae</taxon>
        <taxon>Limosilactobacillus</taxon>
    </lineage>
</organism>
<gene>
    <name evidence="1" type="primary">coaD</name>
    <name type="ordered locus">LAR_0618</name>
</gene>
<dbReference type="EC" id="2.7.7.3" evidence="1"/>
<dbReference type="EMBL" id="AP007281">
    <property type="protein sequence ID" value="BAG25134.1"/>
    <property type="molecule type" value="Genomic_DNA"/>
</dbReference>
<dbReference type="RefSeq" id="WP_003668252.1">
    <property type="nucleotide sequence ID" value="NC_010609.1"/>
</dbReference>
<dbReference type="SMR" id="B2G6Q2"/>
<dbReference type="GeneID" id="77190812"/>
<dbReference type="KEGG" id="lrf:LAR_0618"/>
<dbReference type="HOGENOM" id="CLU_100149_1_1_9"/>
<dbReference type="UniPathway" id="UPA00241">
    <property type="reaction ID" value="UER00355"/>
</dbReference>
<dbReference type="GO" id="GO:0005737">
    <property type="term" value="C:cytoplasm"/>
    <property type="evidence" value="ECO:0007669"/>
    <property type="project" value="UniProtKB-SubCell"/>
</dbReference>
<dbReference type="GO" id="GO:0005524">
    <property type="term" value="F:ATP binding"/>
    <property type="evidence" value="ECO:0007669"/>
    <property type="project" value="UniProtKB-KW"/>
</dbReference>
<dbReference type="GO" id="GO:0004595">
    <property type="term" value="F:pantetheine-phosphate adenylyltransferase activity"/>
    <property type="evidence" value="ECO:0007669"/>
    <property type="project" value="UniProtKB-UniRule"/>
</dbReference>
<dbReference type="GO" id="GO:0015937">
    <property type="term" value="P:coenzyme A biosynthetic process"/>
    <property type="evidence" value="ECO:0007669"/>
    <property type="project" value="UniProtKB-UniRule"/>
</dbReference>
<dbReference type="CDD" id="cd02163">
    <property type="entry name" value="PPAT"/>
    <property type="match status" value="1"/>
</dbReference>
<dbReference type="Gene3D" id="3.40.50.620">
    <property type="entry name" value="HUPs"/>
    <property type="match status" value="1"/>
</dbReference>
<dbReference type="HAMAP" id="MF_00151">
    <property type="entry name" value="PPAT_bact"/>
    <property type="match status" value="1"/>
</dbReference>
<dbReference type="InterPro" id="IPR004821">
    <property type="entry name" value="Cyt_trans-like"/>
</dbReference>
<dbReference type="InterPro" id="IPR001980">
    <property type="entry name" value="PPAT"/>
</dbReference>
<dbReference type="InterPro" id="IPR014729">
    <property type="entry name" value="Rossmann-like_a/b/a_fold"/>
</dbReference>
<dbReference type="NCBIfam" id="TIGR01510">
    <property type="entry name" value="coaD_prev_kdtB"/>
    <property type="match status" value="1"/>
</dbReference>
<dbReference type="NCBIfam" id="TIGR00125">
    <property type="entry name" value="cyt_tran_rel"/>
    <property type="match status" value="1"/>
</dbReference>
<dbReference type="PANTHER" id="PTHR21342">
    <property type="entry name" value="PHOSPHOPANTETHEINE ADENYLYLTRANSFERASE"/>
    <property type="match status" value="1"/>
</dbReference>
<dbReference type="PANTHER" id="PTHR21342:SF1">
    <property type="entry name" value="PHOSPHOPANTETHEINE ADENYLYLTRANSFERASE"/>
    <property type="match status" value="1"/>
</dbReference>
<dbReference type="Pfam" id="PF01467">
    <property type="entry name" value="CTP_transf_like"/>
    <property type="match status" value="1"/>
</dbReference>
<dbReference type="PRINTS" id="PR01020">
    <property type="entry name" value="LPSBIOSNTHSS"/>
</dbReference>
<dbReference type="SUPFAM" id="SSF52374">
    <property type="entry name" value="Nucleotidylyl transferase"/>
    <property type="match status" value="1"/>
</dbReference>
<comment type="function">
    <text evidence="1">Reversibly transfers an adenylyl group from ATP to 4'-phosphopantetheine, yielding dephospho-CoA (dPCoA) and pyrophosphate.</text>
</comment>
<comment type="catalytic activity">
    <reaction evidence="1">
        <text>(R)-4'-phosphopantetheine + ATP + H(+) = 3'-dephospho-CoA + diphosphate</text>
        <dbReference type="Rhea" id="RHEA:19801"/>
        <dbReference type="ChEBI" id="CHEBI:15378"/>
        <dbReference type="ChEBI" id="CHEBI:30616"/>
        <dbReference type="ChEBI" id="CHEBI:33019"/>
        <dbReference type="ChEBI" id="CHEBI:57328"/>
        <dbReference type="ChEBI" id="CHEBI:61723"/>
        <dbReference type="EC" id="2.7.7.3"/>
    </reaction>
</comment>
<comment type="cofactor">
    <cofactor evidence="1">
        <name>Mg(2+)</name>
        <dbReference type="ChEBI" id="CHEBI:18420"/>
    </cofactor>
</comment>
<comment type="pathway">
    <text evidence="1">Cofactor biosynthesis; coenzyme A biosynthesis; CoA from (R)-pantothenate: step 4/5.</text>
</comment>
<comment type="subunit">
    <text evidence="1">Homohexamer.</text>
</comment>
<comment type="subcellular location">
    <subcellularLocation>
        <location evidence="1">Cytoplasm</location>
    </subcellularLocation>
</comment>
<comment type="similarity">
    <text evidence="1">Belongs to the bacterial CoaD family.</text>
</comment>
<sequence length="173" mass="19361">MKVAVFPGSFDPLTLGHLDLIKRGSALFDQLAVAVMTNESKNPLFTVEERVAQIKEAVSGLDNVSVITTEGLTVDLMNRIGADYLMRGLRNTTDFQYERDIAAMNNFLDDQCETVFFLAKPEYQHLSSSLLKEVTSAGGDISAYLPANINEALKKRLMEREMLRVKKDNEKAR</sequence>
<accession>B2G6Q2</accession>
<reference key="1">
    <citation type="journal article" date="2008" name="DNA Res.">
        <title>Comparative genome analysis of Lactobacillus reuteri and Lactobacillus fermentum reveal a genomic island for reuterin and cobalamin production.</title>
        <authorList>
            <person name="Morita H."/>
            <person name="Toh H."/>
            <person name="Fukuda S."/>
            <person name="Horikawa H."/>
            <person name="Oshima K."/>
            <person name="Suzuki T."/>
            <person name="Murakami M."/>
            <person name="Hisamatsu S."/>
            <person name="Kato Y."/>
            <person name="Takizawa T."/>
            <person name="Fukuoka H."/>
            <person name="Yoshimura T."/>
            <person name="Itoh K."/>
            <person name="O'Sullivan D.J."/>
            <person name="McKay L.L."/>
            <person name="Ohno H."/>
            <person name="Kikuchi J."/>
            <person name="Masaoka T."/>
            <person name="Hattori M."/>
        </authorList>
    </citation>
    <scope>NUCLEOTIDE SEQUENCE [LARGE SCALE GENOMIC DNA]</scope>
    <source>
        <strain>JCM 1112</strain>
    </source>
</reference>
<keyword id="KW-0067">ATP-binding</keyword>
<keyword id="KW-0173">Coenzyme A biosynthesis</keyword>
<keyword id="KW-0963">Cytoplasm</keyword>
<keyword id="KW-0460">Magnesium</keyword>
<keyword id="KW-0547">Nucleotide-binding</keyword>
<keyword id="KW-0548">Nucleotidyltransferase</keyword>
<keyword id="KW-0808">Transferase</keyword>
<feature type="chain" id="PRO_1000096808" description="Phosphopantetheine adenylyltransferase">
    <location>
        <begin position="1"/>
        <end position="173"/>
    </location>
</feature>
<feature type="binding site" evidence="1">
    <location>
        <begin position="9"/>
        <end position="10"/>
    </location>
    <ligand>
        <name>ATP</name>
        <dbReference type="ChEBI" id="CHEBI:30616"/>
    </ligand>
</feature>
<feature type="binding site" evidence="1">
    <location>
        <position position="9"/>
    </location>
    <ligand>
        <name>substrate</name>
    </ligand>
</feature>
<feature type="binding site" evidence="1">
    <location>
        <position position="17"/>
    </location>
    <ligand>
        <name>ATP</name>
        <dbReference type="ChEBI" id="CHEBI:30616"/>
    </ligand>
</feature>
<feature type="binding site" evidence="1">
    <location>
        <position position="41"/>
    </location>
    <ligand>
        <name>substrate</name>
    </ligand>
</feature>
<feature type="binding site" evidence="1">
    <location>
        <position position="73"/>
    </location>
    <ligand>
        <name>substrate</name>
    </ligand>
</feature>
<feature type="binding site" evidence="1">
    <location>
        <position position="87"/>
    </location>
    <ligand>
        <name>substrate</name>
    </ligand>
</feature>
<feature type="binding site" evidence="1">
    <location>
        <begin position="88"/>
        <end position="90"/>
    </location>
    <ligand>
        <name>ATP</name>
        <dbReference type="ChEBI" id="CHEBI:30616"/>
    </ligand>
</feature>
<feature type="binding site" evidence="1">
    <location>
        <position position="98"/>
    </location>
    <ligand>
        <name>ATP</name>
        <dbReference type="ChEBI" id="CHEBI:30616"/>
    </ligand>
</feature>
<feature type="binding site" evidence="1">
    <location>
        <begin position="123"/>
        <end position="129"/>
    </location>
    <ligand>
        <name>ATP</name>
        <dbReference type="ChEBI" id="CHEBI:30616"/>
    </ligand>
</feature>
<feature type="site" description="Transition state stabilizer" evidence="1">
    <location>
        <position position="17"/>
    </location>
</feature>
<evidence type="ECO:0000255" key="1">
    <source>
        <dbReference type="HAMAP-Rule" id="MF_00151"/>
    </source>
</evidence>
<proteinExistence type="inferred from homology"/>
<protein>
    <recommendedName>
        <fullName evidence="1">Phosphopantetheine adenylyltransferase</fullName>
        <ecNumber evidence="1">2.7.7.3</ecNumber>
    </recommendedName>
    <alternativeName>
        <fullName evidence="1">Dephospho-CoA pyrophosphorylase</fullName>
    </alternativeName>
    <alternativeName>
        <fullName evidence="1">Pantetheine-phosphate adenylyltransferase</fullName>
        <shortName evidence="1">PPAT</shortName>
    </alternativeName>
</protein>